<proteinExistence type="inferred from homology"/>
<reference key="1">
    <citation type="journal article" date="1999" name="J. Bacteriol.">
        <title>Genomic subtraction identifies Salmonella typhimurium prophages, F-related plasmid sequences, and a novel fimbrial operon, stf, which are absent in Salmonella typhi.</title>
        <authorList>
            <person name="Emmerth M."/>
            <person name="Goebel W."/>
            <person name="Miller S.I."/>
            <person name="Hueck C.J."/>
        </authorList>
    </citation>
    <scope>NUCLEOTIDE SEQUENCE [GENOMIC DNA]</scope>
    <source>
        <strain>ATCC 14028 / SGSG 2980 / CDC 6516-60 / NCTC 12023</strain>
    </source>
</reference>
<reference key="2">
    <citation type="journal article" date="2001" name="Nature">
        <title>Complete genome sequence of Salmonella enterica serovar Typhimurium LT2.</title>
        <authorList>
            <person name="McClelland M."/>
            <person name="Sanderson K.E."/>
            <person name="Spieth J."/>
            <person name="Clifton S.W."/>
            <person name="Latreille P."/>
            <person name="Courtney L."/>
            <person name="Porwollik S."/>
            <person name="Ali J."/>
            <person name="Dante M."/>
            <person name="Du F."/>
            <person name="Hou S."/>
            <person name="Layman D."/>
            <person name="Leonard S."/>
            <person name="Nguyen C."/>
            <person name="Scott K."/>
            <person name="Holmes A."/>
            <person name="Grewal N."/>
            <person name="Mulvaney E."/>
            <person name="Ryan E."/>
            <person name="Sun H."/>
            <person name="Florea L."/>
            <person name="Miller W."/>
            <person name="Stoneking T."/>
            <person name="Nhan M."/>
            <person name="Waterston R."/>
            <person name="Wilson R.K."/>
        </authorList>
    </citation>
    <scope>NUCLEOTIDE SEQUENCE [LARGE SCALE GENOMIC DNA]</scope>
    <source>
        <strain>LT2 / SGSC1412 / ATCC 700720</strain>
    </source>
</reference>
<accession>O87663</accession>
<name>YADU_SALTY</name>
<evidence type="ECO:0000255" key="1"/>
<evidence type="ECO:0000305" key="2"/>
<comment type="similarity">
    <text evidence="2">To E.coli YfcO.</text>
</comment>
<sequence length="279" mass="30262">MKIIRTLFLLLIAVYGSSVVAKPMLKATFSSTTMYYGIGPNSDKSIVAEVTIATPEGVYYGSWNLSGHRKGETLTADSWSGPEPAPKVVLKDFDNTVSRSACKNLPSNWRGCGSFTLEITVQSDDYGCPWLASSHIVATTFITNETYSPPDTRSSVCPKVPVDTFDISWDANVSKQKTTLMLDATGGTVNRTLHTYLMEGGKLCDGSKFDNRGAYCRFVSSGITLNVLGCDQSSVTTSAVDHPITDVELHDINVAVNTRNIGSGQFTSTCSFQYIIDEL</sequence>
<feature type="signal peptide" evidence="1">
    <location>
        <begin position="1"/>
        <end position="21"/>
    </location>
</feature>
<feature type="chain" id="PRO_0000013880" description="Uncharacterized protein YadU">
    <location>
        <begin position="22"/>
        <end position="279"/>
    </location>
</feature>
<dbReference type="EMBL" id="AF093503">
    <property type="protein sequence ID" value="AAC64158.1"/>
    <property type="molecule type" value="Genomic_DNA"/>
</dbReference>
<dbReference type="EMBL" id="AE006468">
    <property type="protein sequence ID" value="AAL19165.1"/>
    <property type="molecule type" value="Genomic_DNA"/>
</dbReference>
<dbReference type="RefSeq" id="NP_459206.1">
    <property type="nucleotide sequence ID" value="NC_003197.2"/>
</dbReference>
<dbReference type="STRING" id="99287.STM0201"/>
<dbReference type="PaxDb" id="99287-STM0201"/>
<dbReference type="GeneID" id="1251719"/>
<dbReference type="KEGG" id="stm:STM0201"/>
<dbReference type="PATRIC" id="fig|99287.12.peg.213"/>
<dbReference type="HOGENOM" id="CLU_095265_0_0_6"/>
<dbReference type="OMA" id="HGCPWLV"/>
<dbReference type="PhylomeDB" id="O87663"/>
<dbReference type="BioCyc" id="SENT99287:STM0201-MONOMER"/>
<dbReference type="Proteomes" id="UP000001014">
    <property type="component" value="Chromosome"/>
</dbReference>
<dbReference type="InterPro" id="IPR021407">
    <property type="entry name" value="DUF2544"/>
</dbReference>
<dbReference type="Pfam" id="PF11245">
    <property type="entry name" value="DUF2544"/>
    <property type="match status" value="1"/>
</dbReference>
<gene>
    <name type="primary">yadU</name>
    <name type="ordered locus">STM0201</name>
</gene>
<protein>
    <recommendedName>
        <fullName>Uncharacterized protein YadU</fullName>
    </recommendedName>
</protein>
<organism>
    <name type="scientific">Salmonella typhimurium (strain LT2 / SGSC1412 / ATCC 700720)</name>
    <dbReference type="NCBI Taxonomy" id="99287"/>
    <lineage>
        <taxon>Bacteria</taxon>
        <taxon>Pseudomonadati</taxon>
        <taxon>Pseudomonadota</taxon>
        <taxon>Gammaproteobacteria</taxon>
        <taxon>Enterobacterales</taxon>
        <taxon>Enterobacteriaceae</taxon>
        <taxon>Salmonella</taxon>
    </lineage>
</organism>
<keyword id="KW-1185">Reference proteome</keyword>
<keyword id="KW-0732">Signal</keyword>